<organism>
    <name type="scientific">Human herpesvirus 6A (strain Uganda-1102)</name>
    <name type="common">HHV-6 variant A</name>
    <name type="synonym">Human B lymphotropic virus</name>
    <dbReference type="NCBI Taxonomy" id="10370"/>
    <lineage>
        <taxon>Viruses</taxon>
        <taxon>Duplodnaviria</taxon>
        <taxon>Heunggongvirae</taxon>
        <taxon>Peploviricota</taxon>
        <taxon>Herviviricetes</taxon>
        <taxon>Herpesvirales</taxon>
        <taxon>Orthoherpesviridae</taxon>
        <taxon>Betaherpesvirinae</taxon>
        <taxon>Roseolovirus</taxon>
        <taxon>Roseolovirus humanbeta6a</taxon>
        <taxon>Human betaherpesvirus 6A</taxon>
    </lineage>
</organism>
<keyword id="KW-0472">Membrane</keyword>
<keyword id="KW-1185">Reference proteome</keyword>
<keyword id="KW-0812">Transmembrane</keyword>
<keyword id="KW-1133">Transmembrane helix</keyword>
<reference key="1">
    <citation type="journal article" date="1994" name="J. Virol.">
        <title>Nucleotide sequence analysis of a 38.5-kilobase-pair region of the genome of human herpesvirus 6 encoding human cytomegalovirus immediate-early gene homologs and transactivating functions.</title>
        <authorList>
            <person name="Nicholas J."/>
            <person name="Martin M.E.D."/>
        </authorList>
    </citation>
    <scope>NUCLEOTIDE SEQUENCE [GENOMIC DNA]</scope>
</reference>
<reference key="2">
    <citation type="journal article" date="1995" name="Virology">
        <title>The DNA sequence of human herpesvirus-6: structure, coding content, and genome evolution.</title>
        <authorList>
            <person name="Gompels U.A."/>
            <person name="Nicholas J."/>
            <person name="Lawrence G.L."/>
            <person name="Jones M."/>
            <person name="Thomson B.J."/>
            <person name="Martin M.E.D."/>
            <person name="Efstathiou S."/>
            <person name="Craxton M.A."/>
            <person name="Macaulay H.A."/>
        </authorList>
    </citation>
    <scope>NUCLEOTIDE SEQUENCE [LARGE SCALE GENOMIC DNA]</scope>
</reference>
<dbReference type="EMBL" id="L25528">
    <property type="protein sequence ID" value="AAA16720.1"/>
    <property type="status" value="ALT_SEQ"/>
    <property type="molecule type" value="Genomic_DNA"/>
</dbReference>
<dbReference type="EMBL" id="X83413">
    <property type="protein sequence ID" value="CAA58394.2"/>
    <property type="molecule type" value="Genomic_DNA"/>
</dbReference>
<dbReference type="PIR" id="T09307">
    <property type="entry name" value="T09307"/>
</dbReference>
<dbReference type="RefSeq" id="NP_042907.2">
    <property type="nucleotide sequence ID" value="NC_001664.2"/>
</dbReference>
<dbReference type="DNASU" id="1487912"/>
<dbReference type="GeneID" id="1487912"/>
<dbReference type="KEGG" id="vg:1487912"/>
<dbReference type="Proteomes" id="UP000009295">
    <property type="component" value="Segment"/>
</dbReference>
<dbReference type="GO" id="GO:0016020">
    <property type="term" value="C:membrane"/>
    <property type="evidence" value="ECO:0007669"/>
    <property type="project" value="UniProtKB-SubCell"/>
</dbReference>
<dbReference type="InterPro" id="IPR008644">
    <property type="entry name" value="Herpes_U15"/>
</dbReference>
<dbReference type="Pfam" id="PF05613">
    <property type="entry name" value="Herpes_U15"/>
    <property type="match status" value="1"/>
</dbReference>
<name>U15_HHV6U</name>
<accession>Q69550</accession>
<accession>Q69038</accession>
<comment type="subcellular location">
    <subcellularLocation>
        <location evidence="2">Membrane</location>
        <topology evidence="2">Single-pass membrane protein</topology>
    </subcellularLocation>
</comment>
<comment type="sequence caution" evidence="2">
    <conflict type="erroneous gene model prediction">
        <sequence resource="EMBL-CDS" id="AAA16720"/>
    </conflict>
</comment>
<protein>
    <recommendedName>
        <fullName>Uncharacterized protein U15</fullName>
    </recommendedName>
</protein>
<sequence length="191" mass="23131">MDVWKRQRLQECRELCPLPVLMSLSNMFSKIEIVYVKYLFKMDFSTMYRYILPALTLSMTVTKSLVIEMLFILKRWEDIDQFFRLNIRKVNDCFIVAQFNHIPIKRKLIVLLYMLTSRQEKQLFLNMIYAFLEKSHLRLGDDEEQNAIRFFSYVDDLHLTRDILLEMIHKLKNTEINQTMELLLSYNELAR</sequence>
<gene>
    <name type="primary">U15</name>
    <name type="synonym">EFLF3</name>
</gene>
<organismHost>
    <name type="scientific">Homo sapiens</name>
    <name type="common">Human</name>
    <dbReference type="NCBI Taxonomy" id="9606"/>
</organismHost>
<proteinExistence type="predicted"/>
<feature type="chain" id="PRO_0000342572" description="Uncharacterized protein U15">
    <location>
        <begin position="1"/>
        <end position="191"/>
    </location>
</feature>
<feature type="transmembrane region" description="Helical" evidence="1">
    <location>
        <begin position="50"/>
        <end position="72"/>
    </location>
</feature>
<evidence type="ECO:0000255" key="1"/>
<evidence type="ECO:0000305" key="2"/>